<name>Y2265_MYCTU</name>
<protein>
    <recommendedName>
        <fullName>Uncharacterized protein Rv2265</fullName>
    </recommendedName>
</protein>
<accession>P9WLG3</accession>
<accession>L0TC00</accession>
<accession>P64961</accession>
<accession>Q50697</accession>
<evidence type="ECO:0000255" key="1"/>
<evidence type="ECO:0000305" key="2"/>
<proteinExistence type="predicted"/>
<comment type="subcellular location">
    <subcellularLocation>
        <location evidence="2">Cell membrane</location>
        <topology evidence="2">Multi-pass membrane protein</topology>
    </subcellularLocation>
</comment>
<feature type="chain" id="PRO_0000103991" description="Uncharacterized protein Rv2265">
    <location>
        <begin position="1"/>
        <end position="409"/>
    </location>
</feature>
<feature type="transmembrane region" description="Helical" evidence="1">
    <location>
        <begin position="18"/>
        <end position="38"/>
    </location>
</feature>
<feature type="transmembrane region" description="Helical" evidence="1">
    <location>
        <begin position="47"/>
        <end position="67"/>
    </location>
</feature>
<feature type="transmembrane region" description="Helical" evidence="1">
    <location>
        <begin position="100"/>
        <end position="120"/>
    </location>
</feature>
<feature type="transmembrane region" description="Helical" evidence="1">
    <location>
        <begin position="159"/>
        <end position="179"/>
    </location>
</feature>
<feature type="transmembrane region" description="Helical" evidence="1">
    <location>
        <begin position="180"/>
        <end position="200"/>
    </location>
</feature>
<feature type="transmembrane region" description="Helical" evidence="1">
    <location>
        <begin position="232"/>
        <end position="252"/>
    </location>
</feature>
<feature type="transmembrane region" description="Helical" evidence="1">
    <location>
        <begin position="260"/>
        <end position="280"/>
    </location>
</feature>
<feature type="transmembrane region" description="Helical" evidence="1">
    <location>
        <begin position="302"/>
        <end position="322"/>
    </location>
</feature>
<feature type="transmembrane region" description="Helical" evidence="1">
    <location>
        <begin position="355"/>
        <end position="375"/>
    </location>
</feature>
<feature type="transmembrane region" description="Helical" evidence="1">
    <location>
        <begin position="380"/>
        <end position="400"/>
    </location>
</feature>
<reference key="1">
    <citation type="journal article" date="1998" name="Nature">
        <title>Deciphering the biology of Mycobacterium tuberculosis from the complete genome sequence.</title>
        <authorList>
            <person name="Cole S.T."/>
            <person name="Brosch R."/>
            <person name="Parkhill J."/>
            <person name="Garnier T."/>
            <person name="Churcher C.M."/>
            <person name="Harris D.E."/>
            <person name="Gordon S.V."/>
            <person name="Eiglmeier K."/>
            <person name="Gas S."/>
            <person name="Barry C.E. III"/>
            <person name="Tekaia F."/>
            <person name="Badcock K."/>
            <person name="Basham D."/>
            <person name="Brown D."/>
            <person name="Chillingworth T."/>
            <person name="Connor R."/>
            <person name="Davies R.M."/>
            <person name="Devlin K."/>
            <person name="Feltwell T."/>
            <person name="Gentles S."/>
            <person name="Hamlin N."/>
            <person name="Holroyd S."/>
            <person name="Hornsby T."/>
            <person name="Jagels K."/>
            <person name="Krogh A."/>
            <person name="McLean J."/>
            <person name="Moule S."/>
            <person name="Murphy L.D."/>
            <person name="Oliver S."/>
            <person name="Osborne J."/>
            <person name="Quail M.A."/>
            <person name="Rajandream M.A."/>
            <person name="Rogers J."/>
            <person name="Rutter S."/>
            <person name="Seeger K."/>
            <person name="Skelton S."/>
            <person name="Squares S."/>
            <person name="Squares R."/>
            <person name="Sulston J.E."/>
            <person name="Taylor K."/>
            <person name="Whitehead S."/>
            <person name="Barrell B.G."/>
        </authorList>
    </citation>
    <scope>NUCLEOTIDE SEQUENCE [LARGE SCALE GENOMIC DNA]</scope>
    <source>
        <strain>ATCC 25618 / H37Rv</strain>
    </source>
</reference>
<organism>
    <name type="scientific">Mycobacterium tuberculosis (strain ATCC 25618 / H37Rv)</name>
    <dbReference type="NCBI Taxonomy" id="83332"/>
    <lineage>
        <taxon>Bacteria</taxon>
        <taxon>Bacillati</taxon>
        <taxon>Actinomycetota</taxon>
        <taxon>Actinomycetes</taxon>
        <taxon>Mycobacteriales</taxon>
        <taxon>Mycobacteriaceae</taxon>
        <taxon>Mycobacterium</taxon>
        <taxon>Mycobacterium tuberculosis complex</taxon>
    </lineage>
</organism>
<keyword id="KW-1003">Cell membrane</keyword>
<keyword id="KW-0472">Membrane</keyword>
<keyword id="KW-1185">Reference proteome</keyword>
<keyword id="KW-0812">Transmembrane</keyword>
<keyword id="KW-1133">Transmembrane helix</keyword>
<sequence length="409" mass="41890">MGANGDVALSRIGATRPALSAWRFVTVFGVVGLLADVVYEGARSITGPLLASLGATGLVVGVVTGVGEAAALGLRLVSGPLADRSRRFWAWTIAGYTLTVVTVPLLGIAGALWVACALVIAERVGKAVRGPAKDTLLSHAASVTGRGRGFAVHEALDQVGAMIGPLTVAGMLAITGNAYAPALGVLTLPGGAALALLLWLQRRVPRPESYEDCPVVLGNPSAPRPWALPAQFWLYCGFTAITMLGFGTFGLLSFHMVSHGVLAAAMVPVVYAAAMAADALTALASGFSYDRYGAKTLAVLPILSILVVLFAFTDNVTMVVIGTLVWGAAVGIQESTLRGVVADLVASPRRASAYGVFAAGLGAATAGGGALIGWLYDISIGTLVVVVIALELMALVMMFAIRLPRVAPS</sequence>
<dbReference type="EMBL" id="AL123456">
    <property type="protein sequence ID" value="CCP45046.1"/>
    <property type="molecule type" value="Genomic_DNA"/>
</dbReference>
<dbReference type="PIR" id="E70729">
    <property type="entry name" value="E70729"/>
</dbReference>
<dbReference type="RefSeq" id="NP_216781.1">
    <property type="nucleotide sequence ID" value="NC_000962.3"/>
</dbReference>
<dbReference type="RefSeq" id="WP_003899241.1">
    <property type="nucleotide sequence ID" value="NZ_NVQJ01000008.1"/>
</dbReference>
<dbReference type="SMR" id="P9WLG3"/>
<dbReference type="STRING" id="83332.Rv2265"/>
<dbReference type="PaxDb" id="83332-Rv2265"/>
<dbReference type="DNASU" id="887976"/>
<dbReference type="GeneID" id="887976"/>
<dbReference type="KEGG" id="mtu:Rv2265"/>
<dbReference type="KEGG" id="mtv:RVBD_2265"/>
<dbReference type="PATRIC" id="fig|83332.111.peg.2520"/>
<dbReference type="TubercuList" id="Rv2265"/>
<dbReference type="eggNOG" id="COG0477">
    <property type="taxonomic scope" value="Bacteria"/>
</dbReference>
<dbReference type="InParanoid" id="P9WLG3"/>
<dbReference type="OrthoDB" id="9803985at2"/>
<dbReference type="PhylomeDB" id="P9WLG3"/>
<dbReference type="Proteomes" id="UP000001584">
    <property type="component" value="Chromosome"/>
</dbReference>
<dbReference type="GO" id="GO:0005886">
    <property type="term" value="C:plasma membrane"/>
    <property type="evidence" value="ECO:0007669"/>
    <property type="project" value="UniProtKB-SubCell"/>
</dbReference>
<dbReference type="GO" id="GO:0022857">
    <property type="term" value="F:transmembrane transporter activity"/>
    <property type="evidence" value="ECO:0007669"/>
    <property type="project" value="InterPro"/>
</dbReference>
<dbReference type="CDD" id="cd17370">
    <property type="entry name" value="MFS_MJ1317_like"/>
    <property type="match status" value="1"/>
</dbReference>
<dbReference type="Gene3D" id="1.20.1250.20">
    <property type="entry name" value="MFS general substrate transporter like domains"/>
    <property type="match status" value="2"/>
</dbReference>
<dbReference type="InterPro" id="IPR011701">
    <property type="entry name" value="MFS"/>
</dbReference>
<dbReference type="InterPro" id="IPR036259">
    <property type="entry name" value="MFS_trans_sf"/>
</dbReference>
<dbReference type="InterPro" id="IPR052425">
    <property type="entry name" value="Uncharacterized_MFS-type"/>
</dbReference>
<dbReference type="PANTHER" id="PTHR42688:SF1">
    <property type="entry name" value="BLR5212 PROTEIN"/>
    <property type="match status" value="1"/>
</dbReference>
<dbReference type="PANTHER" id="PTHR42688">
    <property type="entry name" value="CONSERVED PROTEIN"/>
    <property type="match status" value="1"/>
</dbReference>
<dbReference type="Pfam" id="PF07690">
    <property type="entry name" value="MFS_1"/>
    <property type="match status" value="1"/>
</dbReference>
<dbReference type="SUPFAM" id="SSF103473">
    <property type="entry name" value="MFS general substrate transporter"/>
    <property type="match status" value="1"/>
</dbReference>
<gene>
    <name type="ordered locus">Rv2265</name>
    <name type="ORF">MTCY339.45c</name>
</gene>